<evidence type="ECO:0000250" key="1"/>
<evidence type="ECO:0000255" key="2">
    <source>
        <dbReference type="PROSITE-ProRule" id="PRU01175"/>
    </source>
</evidence>
<evidence type="ECO:0000305" key="3"/>
<organism>
    <name type="scientific">Picrophilus torridus (strain ATCC 700027 / DSM 9790 / JCM 10055 / NBRC 100828 / KAW 2/3)</name>
    <dbReference type="NCBI Taxonomy" id="1122961"/>
    <lineage>
        <taxon>Archaea</taxon>
        <taxon>Methanobacteriati</taxon>
        <taxon>Thermoplasmatota</taxon>
        <taxon>Thermoplasmata</taxon>
        <taxon>Thermoplasmatales</taxon>
        <taxon>Picrophilaceae</taxon>
        <taxon>Picrophilus</taxon>
    </lineage>
</organism>
<keyword id="KW-0963">Cytoplasm</keyword>
<keyword id="KW-0489">Methyltransferase</keyword>
<keyword id="KW-0949">S-adenosyl-L-methionine</keyword>
<keyword id="KW-0808">Transferase</keyword>
<keyword id="KW-0819">tRNA processing</keyword>
<protein>
    <recommendedName>
        <fullName>tRNA (cytidine(56)-2'-O)-methyltransferase</fullName>
        <ecNumber>2.1.1.206</ecNumber>
    </recommendedName>
    <alternativeName>
        <fullName>tRNA ribose 2'-O-methyltransferase aTrm56</fullName>
    </alternativeName>
</protein>
<accession>Q6L171</accession>
<gene>
    <name type="ordered locus">PTO0696</name>
</gene>
<dbReference type="EC" id="2.1.1.206"/>
<dbReference type="EMBL" id="AE017261">
    <property type="protein sequence ID" value="AAT43281.1"/>
    <property type="molecule type" value="Genomic_DNA"/>
</dbReference>
<dbReference type="RefSeq" id="WP_011177497.1">
    <property type="nucleotide sequence ID" value="NC_005877.1"/>
</dbReference>
<dbReference type="SMR" id="Q6L171"/>
<dbReference type="STRING" id="263820.PTO0696"/>
<dbReference type="PaxDb" id="263820-PTO0696"/>
<dbReference type="GeneID" id="2844364"/>
<dbReference type="KEGG" id="pto:PTO0696"/>
<dbReference type="eggNOG" id="arCOG01857">
    <property type="taxonomic scope" value="Archaea"/>
</dbReference>
<dbReference type="HOGENOM" id="CLU_817897_0_0_2"/>
<dbReference type="InParanoid" id="Q6L171"/>
<dbReference type="OrthoDB" id="14397at2157"/>
<dbReference type="Proteomes" id="UP000000438">
    <property type="component" value="Chromosome"/>
</dbReference>
<dbReference type="GO" id="GO:0005737">
    <property type="term" value="C:cytoplasm"/>
    <property type="evidence" value="ECO:0007669"/>
    <property type="project" value="UniProtKB-SubCell"/>
</dbReference>
<dbReference type="GO" id="GO:0106059">
    <property type="term" value="F:tRNA (cytidine(56)-2'-O)-methyltransferase activity"/>
    <property type="evidence" value="ECO:0007669"/>
    <property type="project" value="UniProtKB-EC"/>
</dbReference>
<dbReference type="GO" id="GO:0002128">
    <property type="term" value="P:tRNA nucleoside ribose methylation"/>
    <property type="evidence" value="ECO:0007669"/>
    <property type="project" value="UniProtKB-UniRule"/>
</dbReference>
<dbReference type="CDD" id="cd18083">
    <property type="entry name" value="aTrm56-like"/>
    <property type="match status" value="1"/>
</dbReference>
<dbReference type="CDD" id="cd00077">
    <property type="entry name" value="HDc"/>
    <property type="match status" value="1"/>
</dbReference>
<dbReference type="Gene3D" id="3.40.1280.10">
    <property type="match status" value="1"/>
</dbReference>
<dbReference type="Gene3D" id="1.10.3210.10">
    <property type="entry name" value="Hypothetical protein af1432"/>
    <property type="match status" value="1"/>
</dbReference>
<dbReference type="HAMAP" id="MF_00077">
    <property type="entry name" value="tRNA_methyltr_aTrm56"/>
    <property type="match status" value="1"/>
</dbReference>
<dbReference type="InterPro" id="IPR029028">
    <property type="entry name" value="Alpha/beta_knot_MTases"/>
</dbReference>
<dbReference type="InterPro" id="IPR003607">
    <property type="entry name" value="HD/PDEase_dom"/>
</dbReference>
<dbReference type="InterPro" id="IPR006674">
    <property type="entry name" value="HD_domain"/>
</dbReference>
<dbReference type="InterPro" id="IPR006675">
    <property type="entry name" value="HDIG_dom"/>
</dbReference>
<dbReference type="InterPro" id="IPR029026">
    <property type="entry name" value="tRNA_m1G_MTases_N"/>
</dbReference>
<dbReference type="InterPro" id="IPR002845">
    <property type="entry name" value="tRNA_mtfrase_aTrm56"/>
</dbReference>
<dbReference type="NCBIfam" id="TIGR00277">
    <property type="entry name" value="HDIG"/>
    <property type="match status" value="1"/>
</dbReference>
<dbReference type="NCBIfam" id="NF009343">
    <property type="entry name" value="PRK12703.1"/>
    <property type="match status" value="1"/>
</dbReference>
<dbReference type="PANTHER" id="PTHR42197">
    <property type="entry name" value="TRNA (CYTIDINE(56)-2'-O)-METHYLTRANSFERASE"/>
    <property type="match status" value="1"/>
</dbReference>
<dbReference type="PANTHER" id="PTHR42197:SF1">
    <property type="entry name" value="TRNA (CYTIDINE(56)-2'-O)-METHYLTRANSFERASE"/>
    <property type="match status" value="1"/>
</dbReference>
<dbReference type="Pfam" id="PF01966">
    <property type="entry name" value="HD"/>
    <property type="match status" value="1"/>
</dbReference>
<dbReference type="Pfam" id="PF01994">
    <property type="entry name" value="Trm56"/>
    <property type="match status" value="1"/>
</dbReference>
<dbReference type="SMART" id="SM00471">
    <property type="entry name" value="HDc"/>
    <property type="match status" value="1"/>
</dbReference>
<dbReference type="SUPFAM" id="SSF75217">
    <property type="entry name" value="alpha/beta knot"/>
    <property type="match status" value="1"/>
</dbReference>
<dbReference type="SUPFAM" id="SSF109604">
    <property type="entry name" value="HD-domain/PDEase-like"/>
    <property type="match status" value="1"/>
</dbReference>
<dbReference type="PROSITE" id="PS51831">
    <property type="entry name" value="HD"/>
    <property type="match status" value="1"/>
</dbReference>
<proteinExistence type="inferred from homology"/>
<comment type="function">
    <text evidence="1">Specifically catalyzes the AdoMet-dependent 2'-O-ribose methylation of cytidine at position 56 in tRNAs.</text>
</comment>
<comment type="catalytic activity">
    <reaction>
        <text>cytidine(56) in tRNA + S-adenosyl-L-methionine = 2'-O-methylcytidine(56) in tRNA + S-adenosyl-L-homocysteine + H(+)</text>
        <dbReference type="Rhea" id="RHEA:42968"/>
        <dbReference type="Rhea" id="RHEA-COMP:10308"/>
        <dbReference type="Rhea" id="RHEA-COMP:10309"/>
        <dbReference type="ChEBI" id="CHEBI:15378"/>
        <dbReference type="ChEBI" id="CHEBI:57856"/>
        <dbReference type="ChEBI" id="CHEBI:59789"/>
        <dbReference type="ChEBI" id="CHEBI:74495"/>
        <dbReference type="ChEBI" id="CHEBI:82748"/>
        <dbReference type="EC" id="2.1.1.206"/>
    </reaction>
</comment>
<comment type="subunit">
    <text evidence="1">Homodimer.</text>
</comment>
<comment type="subcellular location">
    <subcellularLocation>
        <location evidence="3">Cytoplasm</location>
    </subcellularLocation>
</comment>
<comment type="similarity">
    <text evidence="3">Belongs to the aTrm56 family.</text>
</comment>
<reference key="1">
    <citation type="journal article" date="2004" name="Proc. Natl. Acad. Sci. U.S.A.">
        <title>Genome sequence of Picrophilus torridus and its implications for life around pH 0.</title>
        <authorList>
            <person name="Fuetterer O."/>
            <person name="Angelov A."/>
            <person name="Liesegang H."/>
            <person name="Gottschalk G."/>
            <person name="Schleper C."/>
            <person name="Schepers B."/>
            <person name="Dock C."/>
            <person name="Antranikian G."/>
            <person name="Liebl W."/>
        </authorList>
    </citation>
    <scope>NUCLEOTIDE SEQUENCE [LARGE SCALE GENOMIC DNA]</scope>
    <source>
        <strain>ATCC 700027 / DSM 9790 / JCM 10055 / NBRC 100828 / KAW 2/3</strain>
    </source>
</reference>
<name>TRM56_PICTO</name>
<sequence>MITVLRIGHRPFRDKRITTHVALVARAFGASSIYIDTRDDELENTVKKVVDNFGGSFEVKTGIEWKSFMKKFHGTKVNLTMYGEPIEKRIDEIKSGDDILVLVGAEKVPIDAYLIADYNISVTNQPHSEVAALAIFLDRYFDGKELEKSYEGKINVVPMNHGKLVKYIPDEDQCLMILKSENADDLIIRHVETVYKVAMRMADCIPCDRRLVAAGALLHDIGRTKTNNIDHAIAGAEILKKKNIDDRIVRIVERHTGAGITSEEAQKLGLPVKDYVPETIEEKIVAHADNLVSMDRIINLKQLMDKYENKNLHDAALRIKKLHEELSSICGRDLDDITKDL</sequence>
<feature type="chain" id="PRO_0000365325" description="tRNA (cytidine(56)-2'-O)-methyltransferase">
    <location>
        <begin position="1"/>
        <end position="341"/>
    </location>
</feature>
<feature type="domain" description="HD" evidence="2">
    <location>
        <begin position="187"/>
        <end position="294"/>
    </location>
</feature>
<feature type="binding site" evidence="1">
    <location>
        <position position="79"/>
    </location>
    <ligand>
        <name>S-adenosyl-L-methionine</name>
        <dbReference type="ChEBI" id="CHEBI:59789"/>
    </ligand>
</feature>
<feature type="binding site" evidence="1">
    <location>
        <begin position="104"/>
        <end position="108"/>
    </location>
    <ligand>
        <name>S-adenosyl-L-methionine</name>
        <dbReference type="ChEBI" id="CHEBI:59789"/>
    </ligand>
</feature>